<gene>
    <name evidence="1" type="primary">rpl22</name>
    <name type="ordered locus">Mthe_1723</name>
</gene>
<accession>A0B9W5</accession>
<protein>
    <recommendedName>
        <fullName evidence="1">Large ribosomal subunit protein uL22</fullName>
    </recommendedName>
    <alternativeName>
        <fullName evidence="2">50S ribosomal protein L22</fullName>
    </alternativeName>
</protein>
<comment type="function">
    <text evidence="1">This protein binds specifically to 23S rRNA. It makes multiple contacts with different domains of the 23S rRNA in the assembled 50S subunit and ribosome.</text>
</comment>
<comment type="function">
    <text evidence="1">The globular domain of the protein is located near the polypeptide exit tunnel on the outside of the subunit, while an extended beta-hairpin is found that lines the wall of the exit tunnel in the center of the 70S ribosome.</text>
</comment>
<comment type="subunit">
    <text evidence="1">Part of the 50S ribosomal subunit.</text>
</comment>
<comment type="similarity">
    <text evidence="1">Belongs to the universal ribosomal protein uL22 family.</text>
</comment>
<organism>
    <name type="scientific">Methanothrix thermoacetophila (strain DSM 6194 / JCM 14653 / NBRC 101360 / PT)</name>
    <name type="common">Methanosaeta thermophila</name>
    <dbReference type="NCBI Taxonomy" id="349307"/>
    <lineage>
        <taxon>Archaea</taxon>
        <taxon>Methanobacteriati</taxon>
        <taxon>Methanobacteriota</taxon>
        <taxon>Stenosarchaea group</taxon>
        <taxon>Methanomicrobia</taxon>
        <taxon>Methanotrichales</taxon>
        <taxon>Methanotrichaceae</taxon>
        <taxon>Methanothrix</taxon>
    </lineage>
</organism>
<dbReference type="EMBL" id="CP000477">
    <property type="protein sequence ID" value="ABK15489.1"/>
    <property type="molecule type" value="Genomic_DNA"/>
</dbReference>
<dbReference type="RefSeq" id="WP_011696867.1">
    <property type="nucleotide sequence ID" value="NC_008553.1"/>
</dbReference>
<dbReference type="SMR" id="A0B9W5"/>
<dbReference type="STRING" id="349307.Mthe_1723"/>
<dbReference type="GeneID" id="4462916"/>
<dbReference type="KEGG" id="mtp:Mthe_1723"/>
<dbReference type="HOGENOM" id="CLU_083987_0_2_2"/>
<dbReference type="OrthoDB" id="314984at2157"/>
<dbReference type="Proteomes" id="UP000000674">
    <property type="component" value="Chromosome"/>
</dbReference>
<dbReference type="GO" id="GO:0022625">
    <property type="term" value="C:cytosolic large ribosomal subunit"/>
    <property type="evidence" value="ECO:0007669"/>
    <property type="project" value="TreeGrafter"/>
</dbReference>
<dbReference type="GO" id="GO:0019843">
    <property type="term" value="F:rRNA binding"/>
    <property type="evidence" value="ECO:0007669"/>
    <property type="project" value="UniProtKB-UniRule"/>
</dbReference>
<dbReference type="GO" id="GO:0003735">
    <property type="term" value="F:structural constituent of ribosome"/>
    <property type="evidence" value="ECO:0007669"/>
    <property type="project" value="InterPro"/>
</dbReference>
<dbReference type="GO" id="GO:0002181">
    <property type="term" value="P:cytoplasmic translation"/>
    <property type="evidence" value="ECO:0007669"/>
    <property type="project" value="TreeGrafter"/>
</dbReference>
<dbReference type="CDD" id="cd00336">
    <property type="entry name" value="Ribosomal_L22"/>
    <property type="match status" value="1"/>
</dbReference>
<dbReference type="Gene3D" id="3.90.470.10">
    <property type="entry name" value="Ribosomal protein L22/L17"/>
    <property type="match status" value="1"/>
</dbReference>
<dbReference type="HAMAP" id="MF_01331_A">
    <property type="entry name" value="Ribosomal_uL22_A"/>
    <property type="match status" value="1"/>
</dbReference>
<dbReference type="InterPro" id="IPR001063">
    <property type="entry name" value="Ribosomal_uL22"/>
</dbReference>
<dbReference type="InterPro" id="IPR005721">
    <property type="entry name" value="Ribosomal_uL22_euk/arc"/>
</dbReference>
<dbReference type="InterPro" id="IPR036394">
    <property type="entry name" value="Ribosomal_uL22_sf"/>
</dbReference>
<dbReference type="NCBIfam" id="NF003260">
    <property type="entry name" value="PRK04223.1"/>
    <property type="match status" value="1"/>
</dbReference>
<dbReference type="NCBIfam" id="TIGR01038">
    <property type="entry name" value="uL22_arch_euk"/>
    <property type="match status" value="1"/>
</dbReference>
<dbReference type="PANTHER" id="PTHR11593">
    <property type="entry name" value="60S RIBOSOMAL PROTEIN L17"/>
    <property type="match status" value="1"/>
</dbReference>
<dbReference type="PANTHER" id="PTHR11593:SF10">
    <property type="entry name" value="60S RIBOSOMAL PROTEIN L17"/>
    <property type="match status" value="1"/>
</dbReference>
<dbReference type="Pfam" id="PF00237">
    <property type="entry name" value="Ribosomal_L22"/>
    <property type="match status" value="1"/>
</dbReference>
<dbReference type="SUPFAM" id="SSF54843">
    <property type="entry name" value="Ribosomal protein L22"/>
    <property type="match status" value="1"/>
</dbReference>
<feature type="chain" id="PRO_1000052610" description="Large ribosomal subunit protein uL22">
    <location>
        <begin position="1"/>
        <end position="152"/>
    </location>
</feature>
<name>RL22_METTP</name>
<sequence>MGRLNYSITPEGRFARAMGVELPISPKHAREICRAIRGMKVEAAERFLQDVIALKRAVPFRRYNRNVPHRHGLVGWPAGRFPQKAARAVLRVLENAIGNAEYKGLEKERLVIGYANTKKGRTFRGWMPRAMGRATPKNQETVSIEMILTEVR</sequence>
<proteinExistence type="inferred from homology"/>
<keyword id="KW-1185">Reference proteome</keyword>
<keyword id="KW-0687">Ribonucleoprotein</keyword>
<keyword id="KW-0689">Ribosomal protein</keyword>
<keyword id="KW-0694">RNA-binding</keyword>
<keyword id="KW-0699">rRNA-binding</keyword>
<evidence type="ECO:0000255" key="1">
    <source>
        <dbReference type="HAMAP-Rule" id="MF_01331"/>
    </source>
</evidence>
<evidence type="ECO:0000305" key="2"/>
<reference key="1">
    <citation type="submission" date="2006-10" db="EMBL/GenBank/DDBJ databases">
        <title>Complete sequence of Methanosaeta thermophila PT.</title>
        <authorList>
            <consortium name="US DOE Joint Genome Institute"/>
            <person name="Copeland A."/>
            <person name="Lucas S."/>
            <person name="Lapidus A."/>
            <person name="Barry K."/>
            <person name="Detter J.C."/>
            <person name="Glavina del Rio T."/>
            <person name="Hammon N."/>
            <person name="Israni S."/>
            <person name="Pitluck S."/>
            <person name="Chain P."/>
            <person name="Malfatti S."/>
            <person name="Shin M."/>
            <person name="Vergez L."/>
            <person name="Schmutz J."/>
            <person name="Larimer F."/>
            <person name="Land M."/>
            <person name="Hauser L."/>
            <person name="Kyrpides N."/>
            <person name="Kim E."/>
            <person name="Smith K.S."/>
            <person name="Ingram-Smith C."/>
            <person name="Richardson P."/>
        </authorList>
    </citation>
    <scope>NUCLEOTIDE SEQUENCE [LARGE SCALE GENOMIC DNA]</scope>
    <source>
        <strain>DSM 6194 / JCM 14653 / NBRC 101360 / PT</strain>
    </source>
</reference>